<gene>
    <name evidence="1" type="primary">cyaY</name>
    <name type="ordered locus">c4726</name>
</gene>
<reference key="1">
    <citation type="journal article" date="2002" name="Proc. Natl. Acad. Sci. U.S.A.">
        <title>Extensive mosaic structure revealed by the complete genome sequence of uropathogenic Escherichia coli.</title>
        <authorList>
            <person name="Welch R.A."/>
            <person name="Burland V."/>
            <person name="Plunkett G. III"/>
            <person name="Redford P."/>
            <person name="Roesch P."/>
            <person name="Rasko D."/>
            <person name="Buckles E.L."/>
            <person name="Liou S.-R."/>
            <person name="Boutin A."/>
            <person name="Hackett J."/>
            <person name="Stroud D."/>
            <person name="Mayhew G.F."/>
            <person name="Rose D.J."/>
            <person name="Zhou S."/>
            <person name="Schwartz D.C."/>
            <person name="Perna N.T."/>
            <person name="Mobley H.L.T."/>
            <person name="Donnenberg M.S."/>
            <person name="Blattner F.R."/>
        </authorList>
    </citation>
    <scope>NUCLEOTIDE SEQUENCE [LARGE SCALE GENOMIC DNA]</scope>
    <source>
        <strain>CFT073 / ATCC 700928 / UPEC</strain>
    </source>
</reference>
<protein>
    <recommendedName>
        <fullName evidence="1">Iron-sulfur cluster assembly protein CyaY</fullName>
    </recommendedName>
</protein>
<keyword id="KW-0408">Iron</keyword>
<keyword id="KW-0479">Metal-binding</keyword>
<keyword id="KW-1185">Reference proteome</keyword>
<proteinExistence type="inferred from homology"/>
<feature type="chain" id="PRO_0000193937" description="Iron-sulfur cluster assembly protein CyaY">
    <location>
        <begin position="1"/>
        <end position="106"/>
    </location>
</feature>
<accession>Q8FBN9</accession>
<comment type="function">
    <text evidence="1">Involved in iron-sulfur (Fe-S) cluster assembly. May act as a regulator of Fe-S biogenesis.</text>
</comment>
<comment type="similarity">
    <text evidence="1">Belongs to the frataxin family.</text>
</comment>
<dbReference type="EMBL" id="AE014075">
    <property type="protein sequence ID" value="AAN83159.1"/>
    <property type="molecule type" value="Genomic_DNA"/>
</dbReference>
<dbReference type="RefSeq" id="WP_000999937.1">
    <property type="nucleotide sequence ID" value="NZ_CP051263.1"/>
</dbReference>
<dbReference type="SMR" id="Q8FBN9"/>
<dbReference type="STRING" id="199310.c4726"/>
<dbReference type="KEGG" id="ecc:c4726"/>
<dbReference type="eggNOG" id="COG1965">
    <property type="taxonomic scope" value="Bacteria"/>
</dbReference>
<dbReference type="HOGENOM" id="CLU_080880_3_0_6"/>
<dbReference type="BioCyc" id="ECOL199310:C4726-MONOMER"/>
<dbReference type="Proteomes" id="UP000001410">
    <property type="component" value="Chromosome"/>
</dbReference>
<dbReference type="GO" id="GO:0005829">
    <property type="term" value="C:cytosol"/>
    <property type="evidence" value="ECO:0007669"/>
    <property type="project" value="TreeGrafter"/>
</dbReference>
<dbReference type="GO" id="GO:0008199">
    <property type="term" value="F:ferric iron binding"/>
    <property type="evidence" value="ECO:0007669"/>
    <property type="project" value="InterPro"/>
</dbReference>
<dbReference type="GO" id="GO:0008198">
    <property type="term" value="F:ferrous iron binding"/>
    <property type="evidence" value="ECO:0007669"/>
    <property type="project" value="TreeGrafter"/>
</dbReference>
<dbReference type="GO" id="GO:0016226">
    <property type="term" value="P:iron-sulfur cluster assembly"/>
    <property type="evidence" value="ECO:0007669"/>
    <property type="project" value="UniProtKB-UniRule"/>
</dbReference>
<dbReference type="CDD" id="cd00503">
    <property type="entry name" value="Frataxin"/>
    <property type="match status" value="1"/>
</dbReference>
<dbReference type="FunFam" id="3.30.920.10:FF:000001">
    <property type="entry name" value="Iron-sulfur cluster assembly protein CyaY"/>
    <property type="match status" value="1"/>
</dbReference>
<dbReference type="Gene3D" id="3.30.920.10">
    <property type="entry name" value="Frataxin/CyaY"/>
    <property type="match status" value="1"/>
</dbReference>
<dbReference type="HAMAP" id="MF_00142">
    <property type="entry name" value="CyaY"/>
    <property type="match status" value="1"/>
</dbReference>
<dbReference type="InterPro" id="IPR047584">
    <property type="entry name" value="CyaY"/>
</dbReference>
<dbReference type="InterPro" id="IPR002908">
    <property type="entry name" value="Frataxin/CyaY"/>
</dbReference>
<dbReference type="InterPro" id="IPR036524">
    <property type="entry name" value="Frataxin/CyaY_sf"/>
</dbReference>
<dbReference type="InterPro" id="IPR020895">
    <property type="entry name" value="Frataxin_CS"/>
</dbReference>
<dbReference type="NCBIfam" id="TIGR03421">
    <property type="entry name" value="FeS_CyaY"/>
    <property type="match status" value="1"/>
</dbReference>
<dbReference type="PANTHER" id="PTHR16821">
    <property type="entry name" value="FRATAXIN"/>
    <property type="match status" value="1"/>
</dbReference>
<dbReference type="PANTHER" id="PTHR16821:SF2">
    <property type="entry name" value="FRATAXIN, MITOCHONDRIAL"/>
    <property type="match status" value="1"/>
</dbReference>
<dbReference type="Pfam" id="PF01491">
    <property type="entry name" value="Frataxin_Cyay"/>
    <property type="match status" value="1"/>
</dbReference>
<dbReference type="SMART" id="SM01219">
    <property type="entry name" value="Frataxin_Cyay"/>
    <property type="match status" value="1"/>
</dbReference>
<dbReference type="SUPFAM" id="SSF55387">
    <property type="entry name" value="Frataxin/Nqo15-like"/>
    <property type="match status" value="1"/>
</dbReference>
<dbReference type="PROSITE" id="PS01344">
    <property type="entry name" value="FRATAXIN_1"/>
    <property type="match status" value="1"/>
</dbReference>
<dbReference type="PROSITE" id="PS50810">
    <property type="entry name" value="FRATAXIN_2"/>
    <property type="match status" value="1"/>
</dbReference>
<evidence type="ECO:0000255" key="1">
    <source>
        <dbReference type="HAMAP-Rule" id="MF_00142"/>
    </source>
</evidence>
<sequence>MNDSEFHRLADQLWLTIEEHLDDWGGDSDIDCEINGGVLTITFENGSKIIINRQEPLHQVWLATKQGGYHFDLKGDEWICDRSGETFWDLLEQAATQQAGETVSFR</sequence>
<name>CYAY_ECOL6</name>
<organism>
    <name type="scientific">Escherichia coli O6:H1 (strain CFT073 / ATCC 700928 / UPEC)</name>
    <dbReference type="NCBI Taxonomy" id="199310"/>
    <lineage>
        <taxon>Bacteria</taxon>
        <taxon>Pseudomonadati</taxon>
        <taxon>Pseudomonadota</taxon>
        <taxon>Gammaproteobacteria</taxon>
        <taxon>Enterobacterales</taxon>
        <taxon>Enterobacteriaceae</taxon>
        <taxon>Escherichia</taxon>
    </lineage>
</organism>